<evidence type="ECO:0000250" key="1"/>
<feature type="chain" id="PRO_0000285832" description="Chaperone protein SycN">
    <location>
        <begin position="1"/>
        <end position="123"/>
    </location>
</feature>
<gene>
    <name type="primary">sycN</name>
    <name type="ordered locus">YEP0021</name>
</gene>
<accession>A1JU79</accession>
<accession>P16162</accession>
<accession>Q52095</accession>
<accession>Q93KT9</accession>
<sequence length="123" mass="13639">MSWIEPIISHFCQDLGVPTSSPLSPLIQLEMAQSGTLQLEQHGATLTLWLARSLAWHRCEDAMVKALTLTAAQKSGTLPLRAGWLGESQLVLFVSLDERSLTLPLLHQAFEQLLRLQQEVLAP</sequence>
<dbReference type="EMBL" id="AF336309">
    <property type="protein sequence ID" value="AAK69220.1"/>
    <property type="molecule type" value="Genomic_DNA"/>
</dbReference>
<dbReference type="EMBL" id="AM286416">
    <property type="protein sequence ID" value="CAL10045.1"/>
    <property type="molecule type" value="Genomic_DNA"/>
</dbReference>
<dbReference type="RefSeq" id="NP_783671.1">
    <property type="nucleotide sequence ID" value="NC_004564.1"/>
</dbReference>
<dbReference type="RefSeq" id="NP_863520.1">
    <property type="nucleotide sequence ID" value="NC_005017.1"/>
</dbReference>
<dbReference type="RefSeq" id="WP_005176811.1">
    <property type="nucleotide sequence ID" value="NC_008791.1"/>
</dbReference>
<dbReference type="RefSeq" id="YP_001004075.1">
    <property type="nucleotide sequence ID" value="NC_008791.1"/>
</dbReference>
<dbReference type="SMR" id="A1JU79"/>
<dbReference type="KEGG" id="yen:YEP0021"/>
<dbReference type="PATRIC" id="fig|393305.7.peg.24"/>
<dbReference type="eggNOG" id="ENOG5033E8X">
    <property type="taxonomic scope" value="Bacteria"/>
</dbReference>
<dbReference type="HOGENOM" id="CLU_164012_0_0_6"/>
<dbReference type="OrthoDB" id="6969782at2"/>
<dbReference type="PRO" id="PR:A1JU79"/>
<dbReference type="Proteomes" id="UP000000642">
    <property type="component" value="Plasmid pYVe8081"/>
</dbReference>
<dbReference type="GO" id="GO:0005737">
    <property type="term" value="C:cytoplasm"/>
    <property type="evidence" value="ECO:0007669"/>
    <property type="project" value="UniProtKB-SubCell"/>
</dbReference>
<dbReference type="GO" id="GO:0005886">
    <property type="term" value="C:plasma membrane"/>
    <property type="evidence" value="ECO:0007669"/>
    <property type="project" value="UniProtKB-SubCell"/>
</dbReference>
<dbReference type="GO" id="GO:0009306">
    <property type="term" value="P:protein secretion"/>
    <property type="evidence" value="ECO:0007669"/>
    <property type="project" value="InterPro"/>
</dbReference>
<dbReference type="CDD" id="cd17031">
    <property type="entry name" value="T3SC_IA_SycN-like"/>
    <property type="match status" value="1"/>
</dbReference>
<dbReference type="Gene3D" id="3.30.1460.10">
    <property type="match status" value="1"/>
</dbReference>
<dbReference type="InterPro" id="IPR012673">
    <property type="entry name" value="T3SS_SynN"/>
</dbReference>
<dbReference type="NCBIfam" id="TIGR02503">
    <property type="entry name" value="type_III_SycN"/>
    <property type="match status" value="1"/>
</dbReference>
<dbReference type="Pfam" id="PF21665">
    <property type="entry name" value="Type_III_SycN"/>
    <property type="match status" value="1"/>
</dbReference>
<dbReference type="SUPFAM" id="SSF69635">
    <property type="entry name" value="Type III secretory system chaperone-like"/>
    <property type="match status" value="1"/>
</dbReference>
<reference key="1">
    <citation type="journal article" date="2001" name="Infect. Immun.">
        <title>Complete DNA sequence of Yersinia enterocolitica serotype 0:8 low-calcium-response plasmid reveals a new virulence plasmid-associated replicon.</title>
        <authorList>
            <person name="Snellings N.J."/>
            <person name="Popek M."/>
            <person name="Lindler L.E."/>
        </authorList>
    </citation>
    <scope>NUCLEOTIDE SEQUENCE [GENOMIC DNA]</scope>
</reference>
<reference key="2">
    <citation type="journal article" date="2006" name="PLoS Genet.">
        <title>The complete genome sequence and comparative genome analysis of the high pathogenicity Yersinia enterocolitica strain 8081.</title>
        <authorList>
            <person name="Thomson N.R."/>
            <person name="Howard S."/>
            <person name="Wren B.W."/>
            <person name="Holden M.T.G."/>
            <person name="Crossman L."/>
            <person name="Challis G.L."/>
            <person name="Churcher C."/>
            <person name="Mungall K."/>
            <person name="Brooks K."/>
            <person name="Chillingworth T."/>
            <person name="Feltwell T."/>
            <person name="Abdellah Z."/>
            <person name="Hauser H."/>
            <person name="Jagels K."/>
            <person name="Maddison M."/>
            <person name="Moule S."/>
            <person name="Sanders M."/>
            <person name="Whitehead S."/>
            <person name="Quail M.A."/>
            <person name="Dougan G."/>
            <person name="Parkhill J."/>
            <person name="Prentice M.B."/>
        </authorList>
    </citation>
    <scope>NUCLEOTIDE SEQUENCE [LARGE SCALE GENOMIC DNA]</scope>
    <source>
        <strain>NCTC 13174 / 8081</strain>
    </source>
</reference>
<protein>
    <recommendedName>
        <fullName>Chaperone protein SycN</fullName>
    </recommendedName>
</protein>
<keyword id="KW-0997">Cell inner membrane</keyword>
<keyword id="KW-1003">Cell membrane</keyword>
<keyword id="KW-0143">Chaperone</keyword>
<keyword id="KW-0963">Cytoplasm</keyword>
<keyword id="KW-0472">Membrane</keyword>
<keyword id="KW-0614">Plasmid</keyword>
<organism>
    <name type="scientific">Yersinia enterocolitica serotype O:8 / biotype 1B (strain NCTC 13174 / 8081)</name>
    <dbReference type="NCBI Taxonomy" id="393305"/>
    <lineage>
        <taxon>Bacteria</taxon>
        <taxon>Pseudomonadati</taxon>
        <taxon>Pseudomonadota</taxon>
        <taxon>Gammaproteobacteria</taxon>
        <taxon>Enterobacterales</taxon>
        <taxon>Yersiniaceae</taxon>
        <taxon>Yersinia</taxon>
    </lineage>
</organism>
<geneLocation type="plasmid">
    <name>pYVe8081</name>
</geneLocation>
<comment type="function">
    <text evidence="1">Functions as a specific chaperone for YopN. It could facilitate the secretion and the subsequent translocation of YopN (By similarity).</text>
</comment>
<comment type="subunit">
    <text evidence="1">Interacts with YscB to form a complex which specifically binds to YopN.</text>
</comment>
<comment type="subcellular location">
    <subcellularLocation>
        <location evidence="1">Cytoplasm</location>
    </subcellularLocation>
    <subcellularLocation>
        <location evidence="1">Cell inner membrane</location>
        <topology evidence="1">Peripheral membrane protein</topology>
    </subcellularLocation>
    <text evidence="1">Not exported across the inner membrane.</text>
</comment>
<name>SYCN_YERE8</name>
<proteinExistence type="inferred from homology"/>